<dbReference type="EC" id="3.1.1.4"/>
<dbReference type="PIR" id="A44179">
    <property type="entry name" value="A44179"/>
</dbReference>
<dbReference type="SMR" id="P81478"/>
<dbReference type="GO" id="GO:0005576">
    <property type="term" value="C:extracellular region"/>
    <property type="evidence" value="ECO:0007669"/>
    <property type="project" value="UniProtKB-SubCell"/>
</dbReference>
<dbReference type="GO" id="GO:0005509">
    <property type="term" value="F:calcium ion binding"/>
    <property type="evidence" value="ECO:0007669"/>
    <property type="project" value="InterPro"/>
</dbReference>
<dbReference type="GO" id="GO:0047498">
    <property type="term" value="F:calcium-dependent phospholipase A2 activity"/>
    <property type="evidence" value="ECO:0007669"/>
    <property type="project" value="TreeGrafter"/>
</dbReference>
<dbReference type="GO" id="GO:0005543">
    <property type="term" value="F:phospholipid binding"/>
    <property type="evidence" value="ECO:0007669"/>
    <property type="project" value="TreeGrafter"/>
</dbReference>
<dbReference type="GO" id="GO:0050482">
    <property type="term" value="P:arachidonate secretion"/>
    <property type="evidence" value="ECO:0007669"/>
    <property type="project" value="InterPro"/>
</dbReference>
<dbReference type="GO" id="GO:0016042">
    <property type="term" value="P:lipid catabolic process"/>
    <property type="evidence" value="ECO:0007669"/>
    <property type="project" value="UniProtKB-KW"/>
</dbReference>
<dbReference type="GO" id="GO:0006644">
    <property type="term" value="P:phospholipid metabolic process"/>
    <property type="evidence" value="ECO:0007669"/>
    <property type="project" value="InterPro"/>
</dbReference>
<dbReference type="CDD" id="cd00125">
    <property type="entry name" value="PLA2c"/>
    <property type="match status" value="1"/>
</dbReference>
<dbReference type="FunFam" id="1.20.90.10:FF:000001">
    <property type="entry name" value="Basic phospholipase A2 homolog"/>
    <property type="match status" value="1"/>
</dbReference>
<dbReference type="Gene3D" id="1.20.90.10">
    <property type="entry name" value="Phospholipase A2 domain"/>
    <property type="match status" value="1"/>
</dbReference>
<dbReference type="InterPro" id="IPR001211">
    <property type="entry name" value="PLipase_A2"/>
</dbReference>
<dbReference type="InterPro" id="IPR033112">
    <property type="entry name" value="PLipase_A2_Asp_AS"/>
</dbReference>
<dbReference type="InterPro" id="IPR016090">
    <property type="entry name" value="PLipase_A2_dom"/>
</dbReference>
<dbReference type="InterPro" id="IPR036444">
    <property type="entry name" value="PLipase_A2_dom_sf"/>
</dbReference>
<dbReference type="InterPro" id="IPR033113">
    <property type="entry name" value="PLipase_A2_His_AS"/>
</dbReference>
<dbReference type="PANTHER" id="PTHR11716:SF101">
    <property type="entry name" value="BASIC PHOSPHOLIPASE A2 PA-11-LIKE"/>
    <property type="match status" value="1"/>
</dbReference>
<dbReference type="PANTHER" id="PTHR11716">
    <property type="entry name" value="PHOSPHOLIPASE A2 FAMILY MEMBER"/>
    <property type="match status" value="1"/>
</dbReference>
<dbReference type="Pfam" id="PF00068">
    <property type="entry name" value="Phospholip_A2_1"/>
    <property type="match status" value="1"/>
</dbReference>
<dbReference type="PRINTS" id="PR00389">
    <property type="entry name" value="PHPHLIPASEA2"/>
</dbReference>
<dbReference type="SMART" id="SM00085">
    <property type="entry name" value="PA2c"/>
    <property type="match status" value="1"/>
</dbReference>
<dbReference type="SUPFAM" id="SSF48619">
    <property type="entry name" value="Phospholipase A2, PLA2"/>
    <property type="match status" value="1"/>
</dbReference>
<dbReference type="PROSITE" id="PS00119">
    <property type="entry name" value="PA2_ASP"/>
    <property type="match status" value="1"/>
</dbReference>
<dbReference type="PROSITE" id="PS00118">
    <property type="entry name" value="PA2_HIS"/>
    <property type="match status" value="1"/>
</dbReference>
<proteinExistence type="evidence at protein level"/>
<keyword id="KW-0106">Calcium</keyword>
<keyword id="KW-0903">Direct protein sequencing</keyword>
<keyword id="KW-1015">Disulfide bond</keyword>
<keyword id="KW-0378">Hydrolase</keyword>
<keyword id="KW-0442">Lipid degradation</keyword>
<keyword id="KW-0443">Lipid metabolism</keyword>
<keyword id="KW-0479">Metal-binding</keyword>
<keyword id="KW-0964">Secreted</keyword>
<sequence>NLLQFENMIRNVAGRSGIWWYSDYGCYCGKGGHGRPQDASDRCCFVHDCCYGKVNGCNPKKAVYIYSLENGDIVCGGDDPCRKEVCECDKAAAICFRDNKDTYDNKYWNIPSENCQEESEPC</sequence>
<accession>P81478</accession>
<evidence type="ECO:0000250" key="1"/>
<evidence type="ECO:0000250" key="2">
    <source>
        <dbReference type="UniProtKB" id="O42191"/>
    </source>
</evidence>
<evidence type="ECO:0000250" key="3">
    <source>
        <dbReference type="UniProtKB" id="P06859"/>
    </source>
</evidence>
<evidence type="ECO:0000255" key="4">
    <source>
        <dbReference type="PROSITE-ProRule" id="PRU10035"/>
    </source>
</evidence>
<evidence type="ECO:0000255" key="5">
    <source>
        <dbReference type="PROSITE-ProRule" id="PRU10036"/>
    </source>
</evidence>
<evidence type="ECO:0000305" key="6"/>
<organism>
    <name type="scientific">Craspedocephalus gramineus</name>
    <name type="common">Bamboo pit viper</name>
    <name type="synonym">Trimeresurus gramineus</name>
    <dbReference type="NCBI Taxonomy" id="8767"/>
    <lineage>
        <taxon>Eukaryota</taxon>
        <taxon>Metazoa</taxon>
        <taxon>Chordata</taxon>
        <taxon>Craniata</taxon>
        <taxon>Vertebrata</taxon>
        <taxon>Euteleostomi</taxon>
        <taxon>Lepidosauria</taxon>
        <taxon>Squamata</taxon>
        <taxon>Bifurcata</taxon>
        <taxon>Unidentata</taxon>
        <taxon>Episquamata</taxon>
        <taxon>Toxicofera</taxon>
        <taxon>Serpentes</taxon>
        <taxon>Colubroidea</taxon>
        <taxon>Viperidae</taxon>
        <taxon>Crotalinae</taxon>
        <taxon>Craspedocephalus</taxon>
    </lineage>
</organism>
<comment type="function">
    <text>Snake venom phospholipase A2 (PLA2) that has high lipolytic activity. PLA2 catalyzes the calcium-dependent hydrolysis of the 2-acyl groups in 3-sn-phosphoglycerides.</text>
</comment>
<comment type="catalytic activity">
    <reaction evidence="4 5">
        <text>a 1,2-diacyl-sn-glycero-3-phosphocholine + H2O = a 1-acyl-sn-glycero-3-phosphocholine + a fatty acid + H(+)</text>
        <dbReference type="Rhea" id="RHEA:15801"/>
        <dbReference type="ChEBI" id="CHEBI:15377"/>
        <dbReference type="ChEBI" id="CHEBI:15378"/>
        <dbReference type="ChEBI" id="CHEBI:28868"/>
        <dbReference type="ChEBI" id="CHEBI:57643"/>
        <dbReference type="ChEBI" id="CHEBI:58168"/>
        <dbReference type="EC" id="3.1.1.4"/>
    </reaction>
</comment>
<comment type="cofactor">
    <cofactor evidence="1">
        <name>Ca(2+)</name>
        <dbReference type="ChEBI" id="CHEBI:29108"/>
    </cofactor>
    <text evidence="1">Binds 1 Ca(2+) ion.</text>
</comment>
<comment type="subcellular location">
    <subcellularLocation>
        <location>Secreted</location>
    </subcellularLocation>
</comment>
<comment type="tissue specificity">
    <text>Expressed by the venom gland.</text>
</comment>
<comment type="similarity">
    <text evidence="6">Belongs to the phospholipase A2 family. Group II subfamily. D49 sub-subfamily.</text>
</comment>
<reference key="1">
    <citation type="journal article" date="1992" name="Toxicon">
        <title>Sequence determination and characterization of a phospholipase A2 isozyme from Trimeresurus gramineus (green habu snake) venom.</title>
        <authorList>
            <person name="Fukagawa T."/>
            <person name="Matsumoto H."/>
            <person name="Shimohigashi Y."/>
            <person name="Ogawa T."/>
            <person name="Oda N."/>
            <person name="Chang C.-C."/>
            <person name="Ohno M."/>
        </authorList>
    </citation>
    <scope>PROTEIN SEQUENCE</scope>
    <source>
        <tissue>Venom</tissue>
    </source>
</reference>
<protein>
    <recommendedName>
        <fullName>Acidic phospholipase A2 2</fullName>
        <shortName>svPLA2</shortName>
        <ecNumber>3.1.1.4</ecNumber>
    </recommendedName>
    <alternativeName>
        <fullName>Phosphatidylcholine 2-acylhydrolase</fullName>
    </alternativeName>
    <alternativeName>
        <fullName>Phospholipase A2 isozyme II</fullName>
        <shortName>PLA2-II</shortName>
    </alternativeName>
</protein>
<feature type="chain" id="PRO_0000161702" description="Acidic phospholipase A2 2">
    <location>
        <begin position="1"/>
        <end position="122"/>
    </location>
</feature>
<feature type="active site" evidence="3">
    <location>
        <position position="47"/>
    </location>
</feature>
<feature type="active site" evidence="3">
    <location>
        <position position="89"/>
    </location>
</feature>
<feature type="binding site" evidence="2">
    <location>
        <position position="27"/>
    </location>
    <ligand>
        <name>Ca(2+)</name>
        <dbReference type="ChEBI" id="CHEBI:29108"/>
    </ligand>
</feature>
<feature type="binding site" evidence="2">
    <location>
        <position position="29"/>
    </location>
    <ligand>
        <name>Ca(2+)</name>
        <dbReference type="ChEBI" id="CHEBI:29108"/>
    </ligand>
</feature>
<feature type="binding site" evidence="2">
    <location>
        <position position="31"/>
    </location>
    <ligand>
        <name>Ca(2+)</name>
        <dbReference type="ChEBI" id="CHEBI:29108"/>
    </ligand>
</feature>
<feature type="binding site" evidence="2">
    <location>
        <position position="48"/>
    </location>
    <ligand>
        <name>Ca(2+)</name>
        <dbReference type="ChEBI" id="CHEBI:29108"/>
    </ligand>
</feature>
<feature type="disulfide bond" evidence="2">
    <location>
        <begin position="26"/>
        <end position="115"/>
    </location>
</feature>
<feature type="disulfide bond" evidence="2">
    <location>
        <begin position="28"/>
        <end position="44"/>
    </location>
</feature>
<feature type="disulfide bond" evidence="2">
    <location>
        <begin position="43"/>
        <end position="95"/>
    </location>
</feature>
<feature type="disulfide bond" evidence="2">
    <location>
        <begin position="49"/>
        <end position="122"/>
    </location>
</feature>
<feature type="disulfide bond" evidence="2">
    <location>
        <begin position="50"/>
        <end position="88"/>
    </location>
</feature>
<feature type="disulfide bond" evidence="2">
    <location>
        <begin position="57"/>
        <end position="81"/>
    </location>
</feature>
<feature type="disulfide bond" evidence="2">
    <location>
        <begin position="75"/>
        <end position="86"/>
    </location>
</feature>
<name>PA2A2_CRAGM</name>